<proteinExistence type="inferred from homology"/>
<gene>
    <name evidence="1" type="primary">mnmE</name>
    <name evidence="1" type="synonym">trmE</name>
    <name type="ordered locus">BAV3419</name>
</gene>
<organism>
    <name type="scientific">Bordetella avium (strain 197N)</name>
    <dbReference type="NCBI Taxonomy" id="360910"/>
    <lineage>
        <taxon>Bacteria</taxon>
        <taxon>Pseudomonadati</taxon>
        <taxon>Pseudomonadota</taxon>
        <taxon>Betaproteobacteria</taxon>
        <taxon>Burkholderiales</taxon>
        <taxon>Alcaligenaceae</taxon>
        <taxon>Bordetella</taxon>
    </lineage>
</organism>
<sequence length="450" mass="48800">MSHALPIAAIATAPGRGGIGVVRVSGPRLDAYIRALLGRDLTPRHAHYLPFLAEDGERIDEGIAIYFQGPHSYTGEDVLELQGHGGPAVLKRLLARCLEAGRSLGMRLAEPGEFTRRAFLNDRMDLAQAEAVADLIEASSEAAARGAMASLSGEFSQRINDLSGRIVHLRMLVEATLDFPEEEIDFLEKYQARPTLDGLRQDLDTLIAQARQGIILREGLHVVLAGQPNVGKSSLLNALAGDDIAIVTPIAGTTRDKVVQEIFIDGVPLHIVDTAGLRETEDTVESIGIARTWKEIERADLILHLQDATAPGDILDVDITARLPARTPVLAVFNKIDLLTSTAQLAENSIGISAKQGLGLEELRARLLQMAGWNPGAESPWLARERHLHALQAARDHLDIAAEHASHDDRVLDLFAEELRLSHESLSSITGKFTSDDLLGEIFSSFCIGK</sequence>
<comment type="function">
    <text evidence="1">Exhibits a very high intrinsic GTPase hydrolysis rate. Involved in the addition of a carboxymethylaminomethyl (cmnm) group at the wobble position (U34) of certain tRNAs, forming tRNA-cmnm(5)s(2)U34.</text>
</comment>
<comment type="cofactor">
    <cofactor evidence="1">
        <name>K(+)</name>
        <dbReference type="ChEBI" id="CHEBI:29103"/>
    </cofactor>
    <text evidence="1">Binds 1 potassium ion per subunit.</text>
</comment>
<comment type="subunit">
    <text evidence="1">Homodimer. Heterotetramer of two MnmE and two MnmG subunits.</text>
</comment>
<comment type="subcellular location">
    <subcellularLocation>
        <location evidence="1">Cytoplasm</location>
    </subcellularLocation>
</comment>
<comment type="similarity">
    <text evidence="1">Belongs to the TRAFAC class TrmE-Era-EngA-EngB-Septin-like GTPase superfamily. TrmE GTPase family.</text>
</comment>
<accession>Q2KTI2</accession>
<evidence type="ECO:0000255" key="1">
    <source>
        <dbReference type="HAMAP-Rule" id="MF_00379"/>
    </source>
</evidence>
<feature type="chain" id="PRO_1000048806" description="tRNA modification GTPase MnmE">
    <location>
        <begin position="1"/>
        <end position="450"/>
    </location>
</feature>
<feature type="domain" description="TrmE-type G">
    <location>
        <begin position="219"/>
        <end position="372"/>
    </location>
</feature>
<feature type="binding site" evidence="1">
    <location>
        <position position="23"/>
    </location>
    <ligand>
        <name>(6S)-5-formyl-5,6,7,8-tetrahydrofolate</name>
        <dbReference type="ChEBI" id="CHEBI:57457"/>
    </ligand>
</feature>
<feature type="binding site" evidence="1">
    <location>
        <position position="80"/>
    </location>
    <ligand>
        <name>(6S)-5-formyl-5,6,7,8-tetrahydrofolate</name>
        <dbReference type="ChEBI" id="CHEBI:57457"/>
    </ligand>
</feature>
<feature type="binding site" evidence="1">
    <location>
        <position position="123"/>
    </location>
    <ligand>
        <name>(6S)-5-formyl-5,6,7,8-tetrahydrofolate</name>
        <dbReference type="ChEBI" id="CHEBI:57457"/>
    </ligand>
</feature>
<feature type="binding site" evidence="1">
    <location>
        <begin position="229"/>
        <end position="234"/>
    </location>
    <ligand>
        <name>GTP</name>
        <dbReference type="ChEBI" id="CHEBI:37565"/>
    </ligand>
</feature>
<feature type="binding site" evidence="1">
    <location>
        <position position="229"/>
    </location>
    <ligand>
        <name>K(+)</name>
        <dbReference type="ChEBI" id="CHEBI:29103"/>
    </ligand>
</feature>
<feature type="binding site" evidence="1">
    <location>
        <position position="233"/>
    </location>
    <ligand>
        <name>Mg(2+)</name>
        <dbReference type="ChEBI" id="CHEBI:18420"/>
    </ligand>
</feature>
<feature type="binding site" evidence="1">
    <location>
        <begin position="248"/>
        <end position="254"/>
    </location>
    <ligand>
        <name>GTP</name>
        <dbReference type="ChEBI" id="CHEBI:37565"/>
    </ligand>
</feature>
<feature type="binding site" evidence="1">
    <location>
        <position position="248"/>
    </location>
    <ligand>
        <name>K(+)</name>
        <dbReference type="ChEBI" id="CHEBI:29103"/>
    </ligand>
</feature>
<feature type="binding site" evidence="1">
    <location>
        <position position="250"/>
    </location>
    <ligand>
        <name>K(+)</name>
        <dbReference type="ChEBI" id="CHEBI:29103"/>
    </ligand>
</feature>
<feature type="binding site" evidence="1">
    <location>
        <position position="253"/>
    </location>
    <ligand>
        <name>K(+)</name>
        <dbReference type="ChEBI" id="CHEBI:29103"/>
    </ligand>
</feature>
<feature type="binding site" evidence="1">
    <location>
        <position position="254"/>
    </location>
    <ligand>
        <name>Mg(2+)</name>
        <dbReference type="ChEBI" id="CHEBI:18420"/>
    </ligand>
</feature>
<feature type="binding site" evidence="1">
    <location>
        <begin position="273"/>
        <end position="276"/>
    </location>
    <ligand>
        <name>GTP</name>
        <dbReference type="ChEBI" id="CHEBI:37565"/>
    </ligand>
</feature>
<feature type="binding site" evidence="1">
    <location>
        <position position="450"/>
    </location>
    <ligand>
        <name>(6S)-5-formyl-5,6,7,8-tetrahydrofolate</name>
        <dbReference type="ChEBI" id="CHEBI:57457"/>
    </ligand>
</feature>
<keyword id="KW-0963">Cytoplasm</keyword>
<keyword id="KW-0342">GTP-binding</keyword>
<keyword id="KW-0378">Hydrolase</keyword>
<keyword id="KW-0460">Magnesium</keyword>
<keyword id="KW-0479">Metal-binding</keyword>
<keyword id="KW-0547">Nucleotide-binding</keyword>
<keyword id="KW-0630">Potassium</keyword>
<keyword id="KW-1185">Reference proteome</keyword>
<keyword id="KW-0819">tRNA processing</keyword>
<protein>
    <recommendedName>
        <fullName evidence="1">tRNA modification GTPase MnmE</fullName>
        <ecNumber evidence="1">3.6.-.-</ecNumber>
    </recommendedName>
</protein>
<dbReference type="EC" id="3.6.-.-" evidence="1"/>
<dbReference type="EMBL" id="AM167904">
    <property type="protein sequence ID" value="CAJ51029.1"/>
    <property type="molecule type" value="Genomic_DNA"/>
</dbReference>
<dbReference type="RefSeq" id="WP_012419055.1">
    <property type="nucleotide sequence ID" value="NC_010645.1"/>
</dbReference>
<dbReference type="SMR" id="Q2KTI2"/>
<dbReference type="STRING" id="360910.BAV3419"/>
<dbReference type="GeneID" id="92936766"/>
<dbReference type="KEGG" id="bav:BAV3419"/>
<dbReference type="eggNOG" id="COG0486">
    <property type="taxonomic scope" value="Bacteria"/>
</dbReference>
<dbReference type="HOGENOM" id="CLU_019624_4_1_4"/>
<dbReference type="OrthoDB" id="9805918at2"/>
<dbReference type="Proteomes" id="UP000001977">
    <property type="component" value="Chromosome"/>
</dbReference>
<dbReference type="GO" id="GO:0005829">
    <property type="term" value="C:cytosol"/>
    <property type="evidence" value="ECO:0007669"/>
    <property type="project" value="TreeGrafter"/>
</dbReference>
<dbReference type="GO" id="GO:0005525">
    <property type="term" value="F:GTP binding"/>
    <property type="evidence" value="ECO:0007669"/>
    <property type="project" value="UniProtKB-UniRule"/>
</dbReference>
<dbReference type="GO" id="GO:0003924">
    <property type="term" value="F:GTPase activity"/>
    <property type="evidence" value="ECO:0007669"/>
    <property type="project" value="UniProtKB-UniRule"/>
</dbReference>
<dbReference type="GO" id="GO:0046872">
    <property type="term" value="F:metal ion binding"/>
    <property type="evidence" value="ECO:0007669"/>
    <property type="project" value="UniProtKB-KW"/>
</dbReference>
<dbReference type="GO" id="GO:0030488">
    <property type="term" value="P:tRNA methylation"/>
    <property type="evidence" value="ECO:0007669"/>
    <property type="project" value="TreeGrafter"/>
</dbReference>
<dbReference type="GO" id="GO:0002098">
    <property type="term" value="P:tRNA wobble uridine modification"/>
    <property type="evidence" value="ECO:0007669"/>
    <property type="project" value="TreeGrafter"/>
</dbReference>
<dbReference type="CDD" id="cd04164">
    <property type="entry name" value="trmE"/>
    <property type="match status" value="1"/>
</dbReference>
<dbReference type="CDD" id="cd14858">
    <property type="entry name" value="TrmE_N"/>
    <property type="match status" value="1"/>
</dbReference>
<dbReference type="FunFam" id="3.40.50.300:FF:001376">
    <property type="entry name" value="tRNA modification GTPase MnmE"/>
    <property type="match status" value="1"/>
</dbReference>
<dbReference type="Gene3D" id="3.40.50.300">
    <property type="entry name" value="P-loop containing nucleotide triphosphate hydrolases"/>
    <property type="match status" value="1"/>
</dbReference>
<dbReference type="Gene3D" id="3.30.1360.120">
    <property type="entry name" value="Probable tRNA modification gtpase trme, domain 1"/>
    <property type="match status" value="1"/>
</dbReference>
<dbReference type="Gene3D" id="1.20.120.430">
    <property type="entry name" value="tRNA modification GTPase MnmE domain 2"/>
    <property type="match status" value="1"/>
</dbReference>
<dbReference type="HAMAP" id="MF_00379">
    <property type="entry name" value="GTPase_MnmE"/>
    <property type="match status" value="1"/>
</dbReference>
<dbReference type="InterPro" id="IPR031168">
    <property type="entry name" value="G_TrmE"/>
</dbReference>
<dbReference type="InterPro" id="IPR006073">
    <property type="entry name" value="GTP-bd"/>
</dbReference>
<dbReference type="InterPro" id="IPR018948">
    <property type="entry name" value="GTP-bd_TrmE_N"/>
</dbReference>
<dbReference type="InterPro" id="IPR004520">
    <property type="entry name" value="GTPase_MnmE"/>
</dbReference>
<dbReference type="InterPro" id="IPR027368">
    <property type="entry name" value="MnmE_dom2"/>
</dbReference>
<dbReference type="InterPro" id="IPR025867">
    <property type="entry name" value="MnmE_helical"/>
</dbReference>
<dbReference type="InterPro" id="IPR027417">
    <property type="entry name" value="P-loop_NTPase"/>
</dbReference>
<dbReference type="InterPro" id="IPR005225">
    <property type="entry name" value="Small_GTP-bd"/>
</dbReference>
<dbReference type="InterPro" id="IPR027266">
    <property type="entry name" value="TrmE/GcvT_dom1"/>
</dbReference>
<dbReference type="NCBIfam" id="TIGR00450">
    <property type="entry name" value="mnmE_trmE_thdF"/>
    <property type="match status" value="1"/>
</dbReference>
<dbReference type="NCBIfam" id="NF003661">
    <property type="entry name" value="PRK05291.1-3"/>
    <property type="match status" value="1"/>
</dbReference>
<dbReference type="NCBIfam" id="TIGR00231">
    <property type="entry name" value="small_GTP"/>
    <property type="match status" value="1"/>
</dbReference>
<dbReference type="PANTHER" id="PTHR42714">
    <property type="entry name" value="TRNA MODIFICATION GTPASE GTPBP3"/>
    <property type="match status" value="1"/>
</dbReference>
<dbReference type="PANTHER" id="PTHR42714:SF2">
    <property type="entry name" value="TRNA MODIFICATION GTPASE GTPBP3, MITOCHONDRIAL"/>
    <property type="match status" value="1"/>
</dbReference>
<dbReference type="Pfam" id="PF01926">
    <property type="entry name" value="MMR_HSR1"/>
    <property type="match status" value="1"/>
</dbReference>
<dbReference type="Pfam" id="PF12631">
    <property type="entry name" value="MnmE_helical"/>
    <property type="match status" value="1"/>
</dbReference>
<dbReference type="Pfam" id="PF10396">
    <property type="entry name" value="TrmE_N"/>
    <property type="match status" value="1"/>
</dbReference>
<dbReference type="SUPFAM" id="SSF52540">
    <property type="entry name" value="P-loop containing nucleoside triphosphate hydrolases"/>
    <property type="match status" value="1"/>
</dbReference>
<dbReference type="PROSITE" id="PS51709">
    <property type="entry name" value="G_TRME"/>
    <property type="match status" value="1"/>
</dbReference>
<name>MNME_BORA1</name>
<reference key="1">
    <citation type="journal article" date="2006" name="J. Bacteriol.">
        <title>Comparison of the genome sequence of the poultry pathogen Bordetella avium with those of B. bronchiseptica, B. pertussis, and B. parapertussis reveals extensive diversity in surface structures associated with host interaction.</title>
        <authorList>
            <person name="Sebaihia M."/>
            <person name="Preston A."/>
            <person name="Maskell D.J."/>
            <person name="Kuzmiak H."/>
            <person name="Connell T.D."/>
            <person name="King N.D."/>
            <person name="Orndorff P.E."/>
            <person name="Miyamoto D.M."/>
            <person name="Thomson N.R."/>
            <person name="Harris D."/>
            <person name="Goble A."/>
            <person name="Lord A."/>
            <person name="Murphy L."/>
            <person name="Quail M.A."/>
            <person name="Rutter S."/>
            <person name="Squares R."/>
            <person name="Squares S."/>
            <person name="Woodward J."/>
            <person name="Parkhill J."/>
            <person name="Temple L.M."/>
        </authorList>
    </citation>
    <scope>NUCLEOTIDE SEQUENCE [LARGE SCALE GENOMIC DNA]</scope>
    <source>
        <strain>197N</strain>
    </source>
</reference>